<sequence length="101" mass="11610">MAKQSMKAREEKRAKLVAQFAEKRATLKAIISDVNASEEDRWNAVLKLQSLPRDSSRSRQRNRCNQTGRPHGFLRKFGLSRIKVREACMKGEIPGLRKASW</sequence>
<evidence type="ECO:0000255" key="1">
    <source>
        <dbReference type="HAMAP-Rule" id="MF_00537"/>
    </source>
</evidence>
<evidence type="ECO:0000305" key="2"/>
<gene>
    <name evidence="1" type="primary">rpsN</name>
    <name type="ordered locus">VC0395_A2161</name>
    <name type="ordered locus">VC395_2696</name>
</gene>
<dbReference type="EMBL" id="CP000627">
    <property type="protein sequence ID" value="ABQ19651.1"/>
    <property type="molecule type" value="Genomic_DNA"/>
</dbReference>
<dbReference type="EMBL" id="CP001235">
    <property type="protein sequence ID" value="ACP10682.1"/>
    <property type="molecule type" value="Genomic_DNA"/>
</dbReference>
<dbReference type="RefSeq" id="WP_001118926.1">
    <property type="nucleotide sequence ID" value="NZ_JAACZH010000007.1"/>
</dbReference>
<dbReference type="SMR" id="A5F553"/>
<dbReference type="GeneID" id="94012765"/>
<dbReference type="KEGG" id="vco:VC0395_A2161"/>
<dbReference type="KEGG" id="vcr:VC395_2696"/>
<dbReference type="PATRIC" id="fig|345073.21.peg.2596"/>
<dbReference type="eggNOG" id="COG0199">
    <property type="taxonomic scope" value="Bacteria"/>
</dbReference>
<dbReference type="HOGENOM" id="CLU_139869_0_1_6"/>
<dbReference type="OrthoDB" id="9810484at2"/>
<dbReference type="Proteomes" id="UP000000249">
    <property type="component" value="Chromosome 2"/>
</dbReference>
<dbReference type="GO" id="GO:0005737">
    <property type="term" value="C:cytoplasm"/>
    <property type="evidence" value="ECO:0007669"/>
    <property type="project" value="UniProtKB-ARBA"/>
</dbReference>
<dbReference type="GO" id="GO:0015935">
    <property type="term" value="C:small ribosomal subunit"/>
    <property type="evidence" value="ECO:0007669"/>
    <property type="project" value="TreeGrafter"/>
</dbReference>
<dbReference type="GO" id="GO:0019843">
    <property type="term" value="F:rRNA binding"/>
    <property type="evidence" value="ECO:0007669"/>
    <property type="project" value="UniProtKB-UniRule"/>
</dbReference>
<dbReference type="GO" id="GO:0003735">
    <property type="term" value="F:structural constituent of ribosome"/>
    <property type="evidence" value="ECO:0007669"/>
    <property type="project" value="InterPro"/>
</dbReference>
<dbReference type="GO" id="GO:0006412">
    <property type="term" value="P:translation"/>
    <property type="evidence" value="ECO:0007669"/>
    <property type="project" value="UniProtKB-UniRule"/>
</dbReference>
<dbReference type="FunFam" id="1.10.287.1480:FF:000001">
    <property type="entry name" value="30S ribosomal protein S14"/>
    <property type="match status" value="1"/>
</dbReference>
<dbReference type="Gene3D" id="1.10.287.1480">
    <property type="match status" value="1"/>
</dbReference>
<dbReference type="HAMAP" id="MF_00537">
    <property type="entry name" value="Ribosomal_uS14_1"/>
    <property type="match status" value="1"/>
</dbReference>
<dbReference type="InterPro" id="IPR001209">
    <property type="entry name" value="Ribosomal_uS14"/>
</dbReference>
<dbReference type="InterPro" id="IPR023036">
    <property type="entry name" value="Ribosomal_uS14_bac/plastid"/>
</dbReference>
<dbReference type="InterPro" id="IPR018271">
    <property type="entry name" value="Ribosomal_uS14_CS"/>
</dbReference>
<dbReference type="NCBIfam" id="NF006477">
    <property type="entry name" value="PRK08881.1"/>
    <property type="match status" value="1"/>
</dbReference>
<dbReference type="PANTHER" id="PTHR19836">
    <property type="entry name" value="30S RIBOSOMAL PROTEIN S14"/>
    <property type="match status" value="1"/>
</dbReference>
<dbReference type="PANTHER" id="PTHR19836:SF19">
    <property type="entry name" value="SMALL RIBOSOMAL SUBUNIT PROTEIN US14M"/>
    <property type="match status" value="1"/>
</dbReference>
<dbReference type="Pfam" id="PF00253">
    <property type="entry name" value="Ribosomal_S14"/>
    <property type="match status" value="1"/>
</dbReference>
<dbReference type="SUPFAM" id="SSF57716">
    <property type="entry name" value="Glucocorticoid receptor-like (DNA-binding domain)"/>
    <property type="match status" value="1"/>
</dbReference>
<dbReference type="PROSITE" id="PS00527">
    <property type="entry name" value="RIBOSOMAL_S14"/>
    <property type="match status" value="1"/>
</dbReference>
<reference key="1">
    <citation type="submission" date="2007-03" db="EMBL/GenBank/DDBJ databases">
        <authorList>
            <person name="Heidelberg J."/>
        </authorList>
    </citation>
    <scope>NUCLEOTIDE SEQUENCE [LARGE SCALE GENOMIC DNA]</scope>
    <source>
        <strain>ATCC 39541 / Classical Ogawa 395 / O395</strain>
    </source>
</reference>
<reference key="2">
    <citation type="journal article" date="2008" name="PLoS ONE">
        <title>A recalibrated molecular clock and independent origins for the cholera pandemic clones.</title>
        <authorList>
            <person name="Feng L."/>
            <person name="Reeves P.R."/>
            <person name="Lan R."/>
            <person name="Ren Y."/>
            <person name="Gao C."/>
            <person name="Zhou Z."/>
            <person name="Ren Y."/>
            <person name="Cheng J."/>
            <person name="Wang W."/>
            <person name="Wang J."/>
            <person name="Qian W."/>
            <person name="Li D."/>
            <person name="Wang L."/>
        </authorList>
    </citation>
    <scope>NUCLEOTIDE SEQUENCE [LARGE SCALE GENOMIC DNA]</scope>
    <source>
        <strain>ATCC 39541 / Classical Ogawa 395 / O395</strain>
    </source>
</reference>
<accession>A5F553</accession>
<accession>C3LXI2</accession>
<feature type="chain" id="PRO_1000128628" description="Small ribosomal subunit protein uS14">
    <location>
        <begin position="1"/>
        <end position="101"/>
    </location>
</feature>
<organism>
    <name type="scientific">Vibrio cholerae serotype O1 (strain ATCC 39541 / Classical Ogawa 395 / O395)</name>
    <dbReference type="NCBI Taxonomy" id="345073"/>
    <lineage>
        <taxon>Bacteria</taxon>
        <taxon>Pseudomonadati</taxon>
        <taxon>Pseudomonadota</taxon>
        <taxon>Gammaproteobacteria</taxon>
        <taxon>Vibrionales</taxon>
        <taxon>Vibrionaceae</taxon>
        <taxon>Vibrio</taxon>
    </lineage>
</organism>
<name>RS14_VIBC3</name>
<proteinExistence type="inferred from homology"/>
<keyword id="KW-0687">Ribonucleoprotein</keyword>
<keyword id="KW-0689">Ribosomal protein</keyword>
<keyword id="KW-0694">RNA-binding</keyword>
<keyword id="KW-0699">rRNA-binding</keyword>
<comment type="function">
    <text evidence="1">Binds 16S rRNA, required for the assembly of 30S particles and may also be responsible for determining the conformation of the 16S rRNA at the A site.</text>
</comment>
<comment type="subunit">
    <text evidence="1">Part of the 30S ribosomal subunit. Contacts proteins S3 and S10.</text>
</comment>
<comment type="similarity">
    <text evidence="1">Belongs to the universal ribosomal protein uS14 family.</text>
</comment>
<protein>
    <recommendedName>
        <fullName evidence="1">Small ribosomal subunit protein uS14</fullName>
    </recommendedName>
    <alternativeName>
        <fullName evidence="2">30S ribosomal protein S14</fullName>
    </alternativeName>
</protein>